<dbReference type="EMBL" id="AE008922">
    <property type="protein sequence ID" value="AAM41738.1"/>
    <property type="status" value="ALT_INIT"/>
    <property type="molecule type" value="Genomic_DNA"/>
</dbReference>
<dbReference type="RefSeq" id="NP_637814.1">
    <property type="nucleotide sequence ID" value="NC_003902.1"/>
</dbReference>
<dbReference type="SMR" id="Q8P7Z3"/>
<dbReference type="STRING" id="190485.XCC2462"/>
<dbReference type="EnsemblBacteria" id="AAM41738">
    <property type="protein sequence ID" value="AAM41738"/>
    <property type="gene ID" value="XCC2462"/>
</dbReference>
<dbReference type="KEGG" id="xcc:XCC2462"/>
<dbReference type="PATRIC" id="fig|190485.4.peg.2625"/>
<dbReference type="eggNOG" id="COG0290">
    <property type="taxonomic scope" value="Bacteria"/>
</dbReference>
<dbReference type="HOGENOM" id="CLU_054919_3_2_6"/>
<dbReference type="OrthoDB" id="9806014at2"/>
<dbReference type="Proteomes" id="UP000001010">
    <property type="component" value="Chromosome"/>
</dbReference>
<dbReference type="GO" id="GO:0005829">
    <property type="term" value="C:cytosol"/>
    <property type="evidence" value="ECO:0000318"/>
    <property type="project" value="GO_Central"/>
</dbReference>
<dbReference type="GO" id="GO:0043022">
    <property type="term" value="F:ribosome binding"/>
    <property type="evidence" value="ECO:0000318"/>
    <property type="project" value="GO_Central"/>
</dbReference>
<dbReference type="GO" id="GO:0003743">
    <property type="term" value="F:translation initiation factor activity"/>
    <property type="evidence" value="ECO:0000318"/>
    <property type="project" value="GO_Central"/>
</dbReference>
<dbReference type="GO" id="GO:0032790">
    <property type="term" value="P:ribosome disassembly"/>
    <property type="evidence" value="ECO:0000318"/>
    <property type="project" value="GO_Central"/>
</dbReference>
<dbReference type="FunFam" id="3.10.20.80:FF:000001">
    <property type="entry name" value="Translation initiation factor IF-3"/>
    <property type="match status" value="1"/>
</dbReference>
<dbReference type="FunFam" id="3.30.110.10:FF:000001">
    <property type="entry name" value="Translation initiation factor IF-3"/>
    <property type="match status" value="1"/>
</dbReference>
<dbReference type="Gene3D" id="3.30.110.10">
    <property type="entry name" value="Translation initiation factor 3 (IF-3), C-terminal domain"/>
    <property type="match status" value="1"/>
</dbReference>
<dbReference type="Gene3D" id="3.10.20.80">
    <property type="entry name" value="Translation initiation factor 3 (IF-3), N-terminal domain"/>
    <property type="match status" value="1"/>
</dbReference>
<dbReference type="HAMAP" id="MF_00080">
    <property type="entry name" value="IF_3"/>
    <property type="match status" value="1"/>
</dbReference>
<dbReference type="InterPro" id="IPR036788">
    <property type="entry name" value="T_IF-3_C_sf"/>
</dbReference>
<dbReference type="InterPro" id="IPR036787">
    <property type="entry name" value="T_IF-3_N_sf"/>
</dbReference>
<dbReference type="InterPro" id="IPR019813">
    <property type="entry name" value="Translation_initiation_fac3_CS"/>
</dbReference>
<dbReference type="InterPro" id="IPR001288">
    <property type="entry name" value="Translation_initiation_fac_3"/>
</dbReference>
<dbReference type="InterPro" id="IPR019815">
    <property type="entry name" value="Translation_initiation_fac_3_C"/>
</dbReference>
<dbReference type="InterPro" id="IPR019814">
    <property type="entry name" value="Translation_initiation_fac_3_N"/>
</dbReference>
<dbReference type="NCBIfam" id="TIGR00168">
    <property type="entry name" value="infC"/>
    <property type="match status" value="1"/>
</dbReference>
<dbReference type="PANTHER" id="PTHR10938">
    <property type="entry name" value="TRANSLATION INITIATION FACTOR IF-3"/>
    <property type="match status" value="1"/>
</dbReference>
<dbReference type="PANTHER" id="PTHR10938:SF0">
    <property type="entry name" value="TRANSLATION INITIATION FACTOR IF-3, MITOCHONDRIAL"/>
    <property type="match status" value="1"/>
</dbReference>
<dbReference type="Pfam" id="PF00707">
    <property type="entry name" value="IF3_C"/>
    <property type="match status" value="1"/>
</dbReference>
<dbReference type="Pfam" id="PF05198">
    <property type="entry name" value="IF3_N"/>
    <property type="match status" value="1"/>
</dbReference>
<dbReference type="SUPFAM" id="SSF55200">
    <property type="entry name" value="Translation initiation factor IF3, C-terminal domain"/>
    <property type="match status" value="1"/>
</dbReference>
<dbReference type="SUPFAM" id="SSF54364">
    <property type="entry name" value="Translation initiation factor IF3, N-terminal domain"/>
    <property type="match status" value="1"/>
</dbReference>
<dbReference type="PROSITE" id="PS00938">
    <property type="entry name" value="IF3"/>
    <property type="match status" value="1"/>
</dbReference>
<organism>
    <name type="scientific">Xanthomonas campestris pv. campestris (strain ATCC 33913 / DSM 3586 / NCPPB 528 / LMG 568 / P 25)</name>
    <dbReference type="NCBI Taxonomy" id="190485"/>
    <lineage>
        <taxon>Bacteria</taxon>
        <taxon>Pseudomonadati</taxon>
        <taxon>Pseudomonadota</taxon>
        <taxon>Gammaproteobacteria</taxon>
        <taxon>Lysobacterales</taxon>
        <taxon>Lysobacteraceae</taxon>
        <taxon>Xanthomonas</taxon>
    </lineage>
</organism>
<protein>
    <recommendedName>
        <fullName evidence="1">Translation initiation factor IF-3</fullName>
    </recommendedName>
</protein>
<sequence>MPLGDCNISTPDNKQNRKNQEIRVPRVRVIGSDGEMVGVLSRDEALAKAEEEGLDLVEIQPQADPPVCKIMDFGKFKFEQQKKANEAKKKTKQVEIKELKFRPVTDEGDYQIKLRNMRRFLEEGDKVKVNIRFRGREMSHQELGREMAARIEADLGEDIVIESRPRLEGRQMVMMIAPKKKI</sequence>
<feature type="chain" id="PRO_0000177608" description="Translation initiation factor IF-3">
    <location>
        <begin position="1"/>
        <end position="182"/>
    </location>
</feature>
<feature type="region of interest" description="Disordered" evidence="2">
    <location>
        <begin position="1"/>
        <end position="22"/>
    </location>
</feature>
<name>IF3_XANCP</name>
<keyword id="KW-0963">Cytoplasm</keyword>
<keyword id="KW-0396">Initiation factor</keyword>
<keyword id="KW-0648">Protein biosynthesis</keyword>
<keyword id="KW-1185">Reference proteome</keyword>
<comment type="function">
    <text evidence="1">IF-3 binds to the 30S ribosomal subunit and shifts the equilibrium between 70S ribosomes and their 50S and 30S subunits in favor of the free subunits, thus enhancing the availability of 30S subunits on which protein synthesis initiation begins.</text>
</comment>
<comment type="subunit">
    <text evidence="1">Monomer.</text>
</comment>
<comment type="subcellular location">
    <subcellularLocation>
        <location evidence="1">Cytoplasm</location>
    </subcellularLocation>
</comment>
<comment type="similarity">
    <text evidence="1">Belongs to the IF-3 family.</text>
</comment>
<comment type="sequence caution" evidence="3">
    <conflict type="erroneous initiation">
        <sequence resource="EMBL-CDS" id="AAM41738"/>
    </conflict>
</comment>
<gene>
    <name evidence="1" type="primary">infC</name>
    <name type="ordered locus">XCC2462</name>
</gene>
<proteinExistence type="inferred from homology"/>
<evidence type="ECO:0000255" key="1">
    <source>
        <dbReference type="HAMAP-Rule" id="MF_00080"/>
    </source>
</evidence>
<evidence type="ECO:0000256" key="2">
    <source>
        <dbReference type="SAM" id="MobiDB-lite"/>
    </source>
</evidence>
<evidence type="ECO:0000305" key="3"/>
<reference key="1">
    <citation type="journal article" date="2002" name="Nature">
        <title>Comparison of the genomes of two Xanthomonas pathogens with differing host specificities.</title>
        <authorList>
            <person name="da Silva A.C.R."/>
            <person name="Ferro J.A."/>
            <person name="Reinach F.C."/>
            <person name="Farah C.S."/>
            <person name="Furlan L.R."/>
            <person name="Quaggio R.B."/>
            <person name="Monteiro-Vitorello C.B."/>
            <person name="Van Sluys M.A."/>
            <person name="Almeida N.F. Jr."/>
            <person name="Alves L.M.C."/>
            <person name="do Amaral A.M."/>
            <person name="Bertolini M.C."/>
            <person name="Camargo L.E.A."/>
            <person name="Camarotte G."/>
            <person name="Cannavan F."/>
            <person name="Cardozo J."/>
            <person name="Chambergo F."/>
            <person name="Ciapina L.P."/>
            <person name="Cicarelli R.M.B."/>
            <person name="Coutinho L.L."/>
            <person name="Cursino-Santos J.R."/>
            <person name="El-Dorry H."/>
            <person name="Faria J.B."/>
            <person name="Ferreira A.J.S."/>
            <person name="Ferreira R.C.C."/>
            <person name="Ferro M.I.T."/>
            <person name="Formighieri E.F."/>
            <person name="Franco M.C."/>
            <person name="Greggio C.C."/>
            <person name="Gruber A."/>
            <person name="Katsuyama A.M."/>
            <person name="Kishi L.T."/>
            <person name="Leite R.P."/>
            <person name="Lemos E.G.M."/>
            <person name="Lemos M.V.F."/>
            <person name="Locali E.C."/>
            <person name="Machado M.A."/>
            <person name="Madeira A.M.B.N."/>
            <person name="Martinez-Rossi N.M."/>
            <person name="Martins E.C."/>
            <person name="Meidanis J."/>
            <person name="Menck C.F.M."/>
            <person name="Miyaki C.Y."/>
            <person name="Moon D.H."/>
            <person name="Moreira L.M."/>
            <person name="Novo M.T.M."/>
            <person name="Okura V.K."/>
            <person name="Oliveira M.C."/>
            <person name="Oliveira V.R."/>
            <person name="Pereira H.A."/>
            <person name="Rossi A."/>
            <person name="Sena J.A.D."/>
            <person name="Silva C."/>
            <person name="de Souza R.F."/>
            <person name="Spinola L.A.F."/>
            <person name="Takita M.A."/>
            <person name="Tamura R.E."/>
            <person name="Teixeira E.C."/>
            <person name="Tezza R.I.D."/>
            <person name="Trindade dos Santos M."/>
            <person name="Truffi D."/>
            <person name="Tsai S.M."/>
            <person name="White F.F."/>
            <person name="Setubal J.C."/>
            <person name="Kitajima J.P."/>
        </authorList>
    </citation>
    <scope>NUCLEOTIDE SEQUENCE [LARGE SCALE GENOMIC DNA]</scope>
    <source>
        <strain>ATCC 33913 / DSM 3586 / NCPPB 528 / LMG 568 / P 25</strain>
    </source>
</reference>
<accession>Q8P7Z3</accession>